<accession>Q63627</accession>
<accession>F1LSM7</accession>
<sequence length="1200" mass="130953">MDAVNAFNQELFSLMDMKPPISRAKMILITKAAIKAIKLYKHVVQIVEKFIKKCKPEYKVPGLYVIDSIVRQSRHQFGTDKDVFGPRFSKNITATFQYLYLCPSEDKSKIVRVLNLWQKNGVFKIEIIQPLLDMAAGTSNAAPGAENVTNNEGSPPPPVKVSSELPQAPTNSMPAVPQLPSSDAFAAVAQLFQTTQGQQLQQILQTFQQPPKPQSPALDSAVMAQVQAITAQLKTAPTQPPEQKTAFDKKLLDRFDYDDEPEAVEDSKKEDAVAVATTALATAAPPVPAAATPAVAPAVPASSATSPPPPQAPFGYPGDGMQQPAYTQHQNVDQFQPRMMALQQDSMQHQVPLPPNGQMPGFGLLSAPPPFPPMPQPGMPQPGMPQPGMPQPGLSQPGLPQPGMPQPGMPQPGMPQPGMPQPGLPQPGLPQPGMPQPGMPQPGMPQPGMPQPGMPPTPPVQPTFQPTFQPQNEPHSQKPHQQEMEVEQPCVTEVKRHVPESRKSRSRSPKRRRSRSGSRSRRSRHRRSRSRSRDRRRHSPRSRSQERRDREKERERRQKGLPQIKSETASVCSTTLWVGQLDKRTTQQDVASLLEEFGPIESINMIPPRGCAYIVMVHRQDAYRALQKLSRGNYKVNQKSIKIAWALNKGIKADFKQYWDVELGVTYIPWDKVKAEELESFCEGGMLDSDTLNPDWKGIPKKPENEVAQNGGAEASHTEPVSPIPKPVPVPVPALPVPAPITVPPPQVPPHQPGPPVVGALQPPAFTPPLGIPPPGFGPGVPPPPPPPPPFLRPGFNPMHLPPGFLPPGPPPPITPPVSIPPPHTPPISIPNLVSGARGNAESADSAKMYGSAGPPAAPTSLPTPPVTQPVSLLGTQGVAPGPVIGLQAPSTGLLGARPGLIPLQRPPGMPPPHLQRFPMMPPRPMPPHMMHRGPPPGPGGFAMPPPHGMKGPFPPHGPFVRPGGMPGLGGPGPGPGGSEDRDGRQQQPQQQQQQQQQQQQQQQQQQQQPPPQQSQTQQQPAPSQQPAPAQQQPQQFRNDNRQQFNSGRDQERFGRRSFGSRVENDRERYGSRSDERDNSNRERREWGRRSPERDRHRDLEERSRRSSGHRDRDRDSRDRESRREKEESRGKEKHEVADRAGGNKAVEAPLSQVGNTDTVSELNKGEAMATVVKPEESPAEATSSVEPEKDSGSAAEAPR</sequence>
<protein>
    <recommendedName>
        <fullName evidence="6">SR-related and CTD-associated factor 4</fullName>
    </recommendedName>
    <alternativeName>
        <fullName evidence="6">CTD-binding SR-like protein RA4</fullName>
    </alternativeName>
    <alternativeName>
        <fullName evidence="6">Splicing factor, arginine/serine-rich 15</fullName>
    </alternativeName>
</protein>
<dbReference type="EMBL" id="AABR07033613">
    <property type="status" value="NOT_ANNOTATED_CDS"/>
    <property type="molecule type" value="Genomic_DNA"/>
</dbReference>
<dbReference type="EMBL" id="U49058">
    <property type="protein sequence ID" value="AAC52660.1"/>
    <property type="molecule type" value="mRNA"/>
</dbReference>
<dbReference type="PIR" id="T31425">
    <property type="entry name" value="T31425"/>
</dbReference>
<dbReference type="SMR" id="Q63627"/>
<dbReference type="FunCoup" id="Q63627">
    <property type="interactions" value="3741"/>
</dbReference>
<dbReference type="STRING" id="10116.ENSRNOP00000047258"/>
<dbReference type="GlyGen" id="Q63627">
    <property type="glycosylation" value="3 sites"/>
</dbReference>
<dbReference type="iPTMnet" id="Q63627"/>
<dbReference type="PhosphoSitePlus" id="Q63627"/>
<dbReference type="jPOST" id="Q63627"/>
<dbReference type="PaxDb" id="10116-ENSRNOP00000047258"/>
<dbReference type="PeptideAtlas" id="Q63627"/>
<dbReference type="UCSC" id="RGD:727896">
    <property type="organism name" value="rat"/>
</dbReference>
<dbReference type="AGR" id="RGD:727896"/>
<dbReference type="RGD" id="727896">
    <property type="gene designation" value="Scaf4"/>
</dbReference>
<dbReference type="VEuPathDB" id="HostDB:ENSRNOG00000002104"/>
<dbReference type="eggNOG" id="KOG0132">
    <property type="taxonomic scope" value="Eukaryota"/>
</dbReference>
<dbReference type="HOGENOM" id="CLU_005263_0_1_1"/>
<dbReference type="InParanoid" id="Q63627"/>
<dbReference type="PhylomeDB" id="Q63627"/>
<dbReference type="TreeFam" id="TF324527"/>
<dbReference type="PRO" id="PR:Q63627"/>
<dbReference type="Proteomes" id="UP000002494">
    <property type="component" value="Chromosome 11"/>
</dbReference>
<dbReference type="Bgee" id="ENSRNOG00000002104">
    <property type="expression patterns" value="Expressed in testis and 19 other cell types or tissues"/>
</dbReference>
<dbReference type="ExpressionAtlas" id="Q63627">
    <property type="expression patterns" value="baseline and differential"/>
</dbReference>
<dbReference type="GO" id="GO:0005634">
    <property type="term" value="C:nucleus"/>
    <property type="evidence" value="ECO:0000250"/>
    <property type="project" value="UniProtKB"/>
</dbReference>
<dbReference type="GO" id="GO:0003723">
    <property type="term" value="F:RNA binding"/>
    <property type="evidence" value="ECO:0000250"/>
    <property type="project" value="UniProtKB"/>
</dbReference>
<dbReference type="GO" id="GO:1990269">
    <property type="term" value="F:RNA polymerase II C-terminal domain phosphoserine binding"/>
    <property type="evidence" value="ECO:0000250"/>
    <property type="project" value="UniProtKB"/>
</dbReference>
<dbReference type="GO" id="GO:0006397">
    <property type="term" value="P:mRNA processing"/>
    <property type="evidence" value="ECO:0000315"/>
    <property type="project" value="RGD"/>
</dbReference>
<dbReference type="GO" id="GO:2000805">
    <property type="term" value="P:negative regulation of termination of RNA polymerase II transcription, poly(A)-coupled"/>
    <property type="evidence" value="ECO:0000250"/>
    <property type="project" value="UniProtKB"/>
</dbReference>
<dbReference type="CDD" id="cd17005">
    <property type="entry name" value="CID_SFRS15_SCAF4"/>
    <property type="match status" value="1"/>
</dbReference>
<dbReference type="CDD" id="cd12461">
    <property type="entry name" value="RRM_SCAF4"/>
    <property type="match status" value="1"/>
</dbReference>
<dbReference type="FunFam" id="1.25.40.90:FF:000004">
    <property type="entry name" value="splicing factor, arginine/serine-rich 15"/>
    <property type="match status" value="1"/>
</dbReference>
<dbReference type="FunFam" id="3.30.70.330:FF:000094">
    <property type="entry name" value="SR-related CTD associated factor 8"/>
    <property type="match status" value="1"/>
</dbReference>
<dbReference type="Gene3D" id="1.25.40.90">
    <property type="match status" value="1"/>
</dbReference>
<dbReference type="Gene3D" id="3.30.70.330">
    <property type="match status" value="1"/>
</dbReference>
<dbReference type="InterPro" id="IPR006569">
    <property type="entry name" value="CID_dom"/>
</dbReference>
<dbReference type="InterPro" id="IPR008942">
    <property type="entry name" value="ENTH_VHS"/>
</dbReference>
<dbReference type="InterPro" id="IPR012677">
    <property type="entry name" value="Nucleotide-bd_a/b_plait_sf"/>
</dbReference>
<dbReference type="InterPro" id="IPR035979">
    <property type="entry name" value="RBD_domain_sf"/>
</dbReference>
<dbReference type="InterPro" id="IPR000504">
    <property type="entry name" value="RRM_dom"/>
</dbReference>
<dbReference type="InterPro" id="IPR034369">
    <property type="entry name" value="SCAF4_RRM"/>
</dbReference>
<dbReference type="InterPro" id="IPR051485">
    <property type="entry name" value="SR-CTD_assoc_factor"/>
</dbReference>
<dbReference type="PANTHER" id="PTHR23140">
    <property type="entry name" value="RNA PROCESSING PROTEIN LD23810P"/>
    <property type="match status" value="1"/>
</dbReference>
<dbReference type="PANTHER" id="PTHR23140:SF3">
    <property type="entry name" value="SR-RELATED AND CTD-ASSOCIATED FACTOR 4"/>
    <property type="match status" value="1"/>
</dbReference>
<dbReference type="Pfam" id="PF04818">
    <property type="entry name" value="CID"/>
    <property type="match status" value="1"/>
</dbReference>
<dbReference type="Pfam" id="PF00076">
    <property type="entry name" value="RRM_1"/>
    <property type="match status" value="1"/>
</dbReference>
<dbReference type="SMART" id="SM00582">
    <property type="entry name" value="RPR"/>
    <property type="match status" value="1"/>
</dbReference>
<dbReference type="SMART" id="SM00360">
    <property type="entry name" value="RRM"/>
    <property type="match status" value="1"/>
</dbReference>
<dbReference type="SUPFAM" id="SSF48464">
    <property type="entry name" value="ENTH/VHS domain"/>
    <property type="match status" value="1"/>
</dbReference>
<dbReference type="SUPFAM" id="SSF54928">
    <property type="entry name" value="RNA-binding domain, RBD"/>
    <property type="match status" value="1"/>
</dbReference>
<dbReference type="PROSITE" id="PS51391">
    <property type="entry name" value="CID"/>
    <property type="match status" value="1"/>
</dbReference>
<dbReference type="PROSITE" id="PS50102">
    <property type="entry name" value="RRM"/>
    <property type="match status" value="1"/>
</dbReference>
<organism>
    <name type="scientific">Rattus norvegicus</name>
    <name type="common">Rat</name>
    <dbReference type="NCBI Taxonomy" id="10116"/>
    <lineage>
        <taxon>Eukaryota</taxon>
        <taxon>Metazoa</taxon>
        <taxon>Chordata</taxon>
        <taxon>Craniata</taxon>
        <taxon>Vertebrata</taxon>
        <taxon>Euteleostomi</taxon>
        <taxon>Mammalia</taxon>
        <taxon>Eutheria</taxon>
        <taxon>Euarchontoglires</taxon>
        <taxon>Glires</taxon>
        <taxon>Rodentia</taxon>
        <taxon>Myomorpha</taxon>
        <taxon>Muroidea</taxon>
        <taxon>Muridae</taxon>
        <taxon>Murinae</taxon>
        <taxon>Rattus</taxon>
    </lineage>
</organism>
<evidence type="ECO:0000250" key="1">
    <source>
        <dbReference type="UniProtKB" id="O95104"/>
    </source>
</evidence>
<evidence type="ECO:0000255" key="2">
    <source>
        <dbReference type="PROSITE-ProRule" id="PRU00176"/>
    </source>
</evidence>
<evidence type="ECO:0000255" key="3">
    <source>
        <dbReference type="PROSITE-ProRule" id="PRU00724"/>
    </source>
</evidence>
<evidence type="ECO:0000256" key="4">
    <source>
        <dbReference type="SAM" id="MobiDB-lite"/>
    </source>
</evidence>
<evidence type="ECO:0000269" key="5">
    <source>
    </source>
</evidence>
<evidence type="ECO:0000305" key="6"/>
<evidence type="ECO:0000312" key="7">
    <source>
        <dbReference type="RGD" id="727896"/>
    </source>
</evidence>
<evidence type="ECO:0007744" key="8">
    <source>
    </source>
</evidence>
<gene>
    <name evidence="7" type="primary">Scaf4</name>
    <name evidence="7" type="synonym">Sfrs15</name>
</gene>
<name>SCAF4_RAT</name>
<feature type="chain" id="PRO_0000081944" description="SR-related and CTD-associated factor 4">
    <location>
        <begin position="1"/>
        <end position="1200"/>
    </location>
</feature>
<feature type="domain" description="CID" evidence="3">
    <location>
        <begin position="1"/>
        <end position="139"/>
    </location>
</feature>
<feature type="domain" description="RRM" evidence="2">
    <location>
        <begin position="574"/>
        <end position="648"/>
    </location>
</feature>
<feature type="region of interest" description="Disordered" evidence="4">
    <location>
        <begin position="140"/>
        <end position="172"/>
    </location>
</feature>
<feature type="region of interest" description="Disordered" evidence="4">
    <location>
        <begin position="299"/>
        <end position="324"/>
    </location>
</feature>
<feature type="region of interest" description="Disordered" evidence="4">
    <location>
        <begin position="346"/>
        <end position="566"/>
    </location>
</feature>
<feature type="region of interest" description="Disordered" evidence="4">
    <location>
        <begin position="696"/>
        <end position="724"/>
    </location>
</feature>
<feature type="region of interest" description="Disordered" evidence="4">
    <location>
        <begin position="834"/>
        <end position="875"/>
    </location>
</feature>
<feature type="region of interest" description="Disordered" evidence="4">
    <location>
        <begin position="927"/>
        <end position="1200"/>
    </location>
</feature>
<feature type="compositionally biased region" description="Polar residues" evidence="4">
    <location>
        <begin position="140"/>
        <end position="153"/>
    </location>
</feature>
<feature type="compositionally biased region" description="Pro residues" evidence="4">
    <location>
        <begin position="367"/>
        <end position="390"/>
    </location>
</feature>
<feature type="compositionally biased region" description="Pro residues" evidence="4">
    <location>
        <begin position="399"/>
        <end position="461"/>
    </location>
</feature>
<feature type="compositionally biased region" description="Low complexity" evidence="4">
    <location>
        <begin position="462"/>
        <end position="471"/>
    </location>
</feature>
<feature type="compositionally biased region" description="Basic and acidic residues" evidence="4">
    <location>
        <begin position="493"/>
        <end position="503"/>
    </location>
</feature>
<feature type="compositionally biased region" description="Basic residues" evidence="4">
    <location>
        <begin position="504"/>
        <end position="541"/>
    </location>
</feature>
<feature type="compositionally biased region" description="Basic and acidic residues" evidence="4">
    <location>
        <begin position="543"/>
        <end position="558"/>
    </location>
</feature>
<feature type="compositionally biased region" description="Pro residues" evidence="4">
    <location>
        <begin position="856"/>
        <end position="868"/>
    </location>
</feature>
<feature type="compositionally biased region" description="Pro residues" evidence="4">
    <location>
        <begin position="927"/>
        <end position="958"/>
    </location>
</feature>
<feature type="compositionally biased region" description="Gly residues" evidence="4">
    <location>
        <begin position="965"/>
        <end position="978"/>
    </location>
</feature>
<feature type="compositionally biased region" description="Low complexity" evidence="4">
    <location>
        <begin position="986"/>
        <end position="1036"/>
    </location>
</feature>
<feature type="compositionally biased region" description="Basic and acidic residues" evidence="4">
    <location>
        <begin position="1063"/>
        <end position="1139"/>
    </location>
</feature>
<feature type="compositionally biased region" description="Polar residues" evidence="4">
    <location>
        <begin position="1153"/>
        <end position="1162"/>
    </location>
</feature>
<feature type="modified residue" description="N6-acetyllysine" evidence="1">
    <location>
        <position position="49"/>
    </location>
</feature>
<feature type="modified residue" description="Phosphoserine" evidence="1">
    <location>
        <position position="154"/>
    </location>
</feature>
<feature type="modified residue" description="Phosphoserine" evidence="1">
    <location>
        <position position="722"/>
    </location>
</feature>
<feature type="modified residue" description="Phosphoserine" evidence="1">
    <location>
        <position position="1058"/>
    </location>
</feature>
<feature type="modified residue" description="Phosphoserine" evidence="8">
    <location>
        <position position="1178"/>
    </location>
</feature>
<feature type="sequence conflict" description="In Ref. 2; AAC52660." ref="2">
    <original>A</original>
    <variation>D</variation>
    <location>
        <position position="189"/>
    </location>
</feature>
<feature type="sequence conflict" description="In Ref. 2; AAC52660." ref="2">
    <original>P</original>
    <variation>A</variation>
    <location>
        <position position="425"/>
    </location>
</feature>
<feature type="sequence conflict" description="In Ref. 2; AAC52660." ref="2">
    <original>P</original>
    <variation>A</variation>
    <location>
        <position position="430"/>
    </location>
</feature>
<feature type="sequence conflict" description="In Ref. 2; AAC52660." ref="2">
    <original>LR</original>
    <variation>WG</variation>
    <location>
        <begin position="792"/>
        <end position="793"/>
    </location>
</feature>
<feature type="sequence conflict" description="In Ref. 2; AAC52660." ref="2">
    <original>A</original>
    <variation>G</variation>
    <location>
        <position position="897"/>
    </location>
</feature>
<comment type="function">
    <text evidence="1">Anti-terminator protein required to prevent early mRNA termination during transcription. Together with SCAF8, acts by suppressing the use of early, alternative poly(A) sites, thereby preventing the accumulation of non-functional truncated proteins. Mechanistically, associates with the phosphorylated C-terminal heptapeptide repeat domain (CTD) of the largest RNA polymerase II subunit (POLR2A), and subsequently binds nascent RNA upstream of early polyadenylation sites to prevent premature mRNA transcript cleavage and polyadenylation. Independently of SCAF8, also acts as a suppressor of transcriptional readthrough.</text>
</comment>
<comment type="subunit">
    <text evidence="5">Interacts with POLR2A; via C-terminal heptapeptide repeat domain (CTD) phosphorylated at 'Ser-2' and 'Ser-5'.</text>
</comment>
<comment type="subcellular location">
    <subcellularLocation>
        <location evidence="1">Nucleus</location>
    </subcellularLocation>
</comment>
<proteinExistence type="evidence at protein level"/>
<keyword id="KW-0007">Acetylation</keyword>
<keyword id="KW-0539">Nucleus</keyword>
<keyword id="KW-0597">Phosphoprotein</keyword>
<keyword id="KW-1185">Reference proteome</keyword>
<keyword id="KW-0694">RNA-binding</keyword>
<keyword id="KW-0804">Transcription</keyword>
<keyword id="KW-0805">Transcription regulation</keyword>
<reference key="1">
    <citation type="journal article" date="2004" name="Nature">
        <title>Genome sequence of the Brown Norway rat yields insights into mammalian evolution.</title>
        <authorList>
            <person name="Gibbs R.A."/>
            <person name="Weinstock G.M."/>
            <person name="Metzker M.L."/>
            <person name="Muzny D.M."/>
            <person name="Sodergren E.J."/>
            <person name="Scherer S."/>
            <person name="Scott G."/>
            <person name="Steffen D."/>
            <person name="Worley K.C."/>
            <person name="Burch P.E."/>
            <person name="Okwuonu G."/>
            <person name="Hines S."/>
            <person name="Lewis L."/>
            <person name="Deramo C."/>
            <person name="Delgado O."/>
            <person name="Dugan-Rocha S."/>
            <person name="Miner G."/>
            <person name="Morgan M."/>
            <person name="Hawes A."/>
            <person name="Gill R."/>
            <person name="Holt R.A."/>
            <person name="Adams M.D."/>
            <person name="Amanatides P.G."/>
            <person name="Baden-Tillson H."/>
            <person name="Barnstead M."/>
            <person name="Chin S."/>
            <person name="Evans C.A."/>
            <person name="Ferriera S."/>
            <person name="Fosler C."/>
            <person name="Glodek A."/>
            <person name="Gu Z."/>
            <person name="Jennings D."/>
            <person name="Kraft C.L."/>
            <person name="Nguyen T."/>
            <person name="Pfannkoch C.M."/>
            <person name="Sitter C."/>
            <person name="Sutton G.G."/>
            <person name="Venter J.C."/>
            <person name="Woodage T."/>
            <person name="Smith D."/>
            <person name="Lee H.-M."/>
            <person name="Gustafson E."/>
            <person name="Cahill P."/>
            <person name="Kana A."/>
            <person name="Doucette-Stamm L."/>
            <person name="Weinstock K."/>
            <person name="Fechtel K."/>
            <person name="Weiss R.B."/>
            <person name="Dunn D.M."/>
            <person name="Green E.D."/>
            <person name="Blakesley R.W."/>
            <person name="Bouffard G.G."/>
            <person name="De Jong P.J."/>
            <person name="Osoegawa K."/>
            <person name="Zhu B."/>
            <person name="Marra M."/>
            <person name="Schein J."/>
            <person name="Bosdet I."/>
            <person name="Fjell C."/>
            <person name="Jones S."/>
            <person name="Krzywinski M."/>
            <person name="Mathewson C."/>
            <person name="Siddiqui A."/>
            <person name="Wye N."/>
            <person name="McPherson J."/>
            <person name="Zhao S."/>
            <person name="Fraser C.M."/>
            <person name="Shetty J."/>
            <person name="Shatsman S."/>
            <person name="Geer K."/>
            <person name="Chen Y."/>
            <person name="Abramzon S."/>
            <person name="Nierman W.C."/>
            <person name="Havlak P.H."/>
            <person name="Chen R."/>
            <person name="Durbin K.J."/>
            <person name="Egan A."/>
            <person name="Ren Y."/>
            <person name="Song X.-Z."/>
            <person name="Li B."/>
            <person name="Liu Y."/>
            <person name="Qin X."/>
            <person name="Cawley S."/>
            <person name="Cooney A.J."/>
            <person name="D'Souza L.M."/>
            <person name="Martin K."/>
            <person name="Wu J.Q."/>
            <person name="Gonzalez-Garay M.L."/>
            <person name="Jackson A.R."/>
            <person name="Kalafus K.J."/>
            <person name="McLeod M.P."/>
            <person name="Milosavljevic A."/>
            <person name="Virk D."/>
            <person name="Volkov A."/>
            <person name="Wheeler D.A."/>
            <person name="Zhang Z."/>
            <person name="Bailey J.A."/>
            <person name="Eichler E.E."/>
            <person name="Tuzun E."/>
            <person name="Birney E."/>
            <person name="Mongin E."/>
            <person name="Ureta-Vidal A."/>
            <person name="Woodwark C."/>
            <person name="Zdobnov E."/>
            <person name="Bork P."/>
            <person name="Suyama M."/>
            <person name="Torrents D."/>
            <person name="Alexandersson M."/>
            <person name="Trask B.J."/>
            <person name="Young J.M."/>
            <person name="Huang H."/>
            <person name="Wang H."/>
            <person name="Xing H."/>
            <person name="Daniels S."/>
            <person name="Gietzen D."/>
            <person name="Schmidt J."/>
            <person name="Stevens K."/>
            <person name="Vitt U."/>
            <person name="Wingrove J."/>
            <person name="Camara F."/>
            <person name="Mar Alba M."/>
            <person name="Abril J.F."/>
            <person name="Guigo R."/>
            <person name="Smit A."/>
            <person name="Dubchak I."/>
            <person name="Rubin E.M."/>
            <person name="Couronne O."/>
            <person name="Poliakov A."/>
            <person name="Huebner N."/>
            <person name="Ganten D."/>
            <person name="Goesele C."/>
            <person name="Hummel O."/>
            <person name="Kreitler T."/>
            <person name="Lee Y.-A."/>
            <person name="Monti J."/>
            <person name="Schulz H."/>
            <person name="Zimdahl H."/>
            <person name="Himmelbauer H."/>
            <person name="Lehrach H."/>
            <person name="Jacob H.J."/>
            <person name="Bromberg S."/>
            <person name="Gullings-Handley J."/>
            <person name="Jensen-Seaman M.I."/>
            <person name="Kwitek A.E."/>
            <person name="Lazar J."/>
            <person name="Pasko D."/>
            <person name="Tonellato P.J."/>
            <person name="Twigger S."/>
            <person name="Ponting C.P."/>
            <person name="Duarte J.M."/>
            <person name="Rice S."/>
            <person name="Goodstadt L."/>
            <person name="Beatson S.A."/>
            <person name="Emes R.D."/>
            <person name="Winter E.E."/>
            <person name="Webber C."/>
            <person name="Brandt P."/>
            <person name="Nyakatura G."/>
            <person name="Adetobi M."/>
            <person name="Chiaromonte F."/>
            <person name="Elnitski L."/>
            <person name="Eswara P."/>
            <person name="Hardison R.C."/>
            <person name="Hou M."/>
            <person name="Kolbe D."/>
            <person name="Makova K."/>
            <person name="Miller W."/>
            <person name="Nekrutenko A."/>
            <person name="Riemer C."/>
            <person name="Schwartz S."/>
            <person name="Taylor J."/>
            <person name="Yang S."/>
            <person name="Zhang Y."/>
            <person name="Lindpaintner K."/>
            <person name="Andrews T.D."/>
            <person name="Caccamo M."/>
            <person name="Clamp M."/>
            <person name="Clarke L."/>
            <person name="Curwen V."/>
            <person name="Durbin R.M."/>
            <person name="Eyras E."/>
            <person name="Searle S.M."/>
            <person name="Cooper G.M."/>
            <person name="Batzoglou S."/>
            <person name="Brudno M."/>
            <person name="Sidow A."/>
            <person name="Stone E.A."/>
            <person name="Payseur B.A."/>
            <person name="Bourque G."/>
            <person name="Lopez-Otin C."/>
            <person name="Puente X.S."/>
            <person name="Chakrabarti K."/>
            <person name="Chatterji S."/>
            <person name="Dewey C."/>
            <person name="Pachter L."/>
            <person name="Bray N."/>
            <person name="Yap V.B."/>
            <person name="Caspi A."/>
            <person name="Tesler G."/>
            <person name="Pevzner P.A."/>
            <person name="Haussler D."/>
            <person name="Roskin K.M."/>
            <person name="Baertsch R."/>
            <person name="Clawson H."/>
            <person name="Furey T.S."/>
            <person name="Hinrichs A.S."/>
            <person name="Karolchik D."/>
            <person name="Kent W.J."/>
            <person name="Rosenbloom K.R."/>
            <person name="Trumbower H."/>
            <person name="Weirauch M."/>
            <person name="Cooper D.N."/>
            <person name="Stenson P.D."/>
            <person name="Ma B."/>
            <person name="Brent M."/>
            <person name="Arumugam M."/>
            <person name="Shteynberg D."/>
            <person name="Copley R.R."/>
            <person name="Taylor M.S."/>
            <person name="Riethman H."/>
            <person name="Mudunuri U."/>
            <person name="Peterson J."/>
            <person name="Guyer M."/>
            <person name="Felsenfeld A."/>
            <person name="Old S."/>
            <person name="Mockrin S."/>
            <person name="Collins F.S."/>
        </authorList>
    </citation>
    <scope>NUCLEOTIDE SEQUENCE [LARGE SCALE GENOMIC DNA]</scope>
    <source>
        <strain>Brown Norway</strain>
    </source>
</reference>
<reference key="2">
    <citation type="journal article" date="1996" name="Proc. Natl. Acad. Sci. U.S.A.">
        <title>The C-terminal domain of the largest subunit of RNA polymerase II interacts with a novel set of serine/arginine-rich proteins.</title>
        <authorList>
            <person name="Yuryev A."/>
            <person name="Patturajan M."/>
            <person name="Litingtung Y."/>
            <person name="Joshi R.V."/>
            <person name="Gentile C."/>
            <person name="Gebara M."/>
            <person name="Corden J.L."/>
        </authorList>
    </citation>
    <scope>NUCLEOTIDE SEQUENCE [MRNA] OF 153-1200</scope>
    <scope>INTERACTION WITH POLR2A</scope>
    <source>
        <tissue>Hippocampus</tissue>
    </source>
</reference>
<reference key="3">
    <citation type="journal article" date="2012" name="Nat. Commun.">
        <title>Quantitative maps of protein phosphorylation sites across 14 different rat organs and tissues.</title>
        <authorList>
            <person name="Lundby A."/>
            <person name="Secher A."/>
            <person name="Lage K."/>
            <person name="Nordsborg N.B."/>
            <person name="Dmytriyev A."/>
            <person name="Lundby C."/>
            <person name="Olsen J.V."/>
        </authorList>
    </citation>
    <scope>PHOSPHORYLATION [LARGE SCALE ANALYSIS] AT SER-1178</scope>
    <scope>IDENTIFICATION BY MASS SPECTROMETRY [LARGE SCALE ANALYSIS]</scope>
</reference>